<proteinExistence type="inferred from homology"/>
<keyword id="KW-0131">Cell cycle</keyword>
<keyword id="KW-0132">Cell division</keyword>
<keyword id="KW-0997">Cell inner membrane</keyword>
<keyword id="KW-1003">Cell membrane</keyword>
<keyword id="KW-0133">Cell shape</keyword>
<keyword id="KW-0961">Cell wall biogenesis/degradation</keyword>
<keyword id="KW-0328">Glycosyltransferase</keyword>
<keyword id="KW-0472">Membrane</keyword>
<keyword id="KW-0573">Peptidoglycan synthesis</keyword>
<keyword id="KW-1185">Reference proteome</keyword>
<keyword id="KW-0808">Transferase</keyword>
<evidence type="ECO:0000255" key="1">
    <source>
        <dbReference type="HAMAP-Rule" id="MF_00033"/>
    </source>
</evidence>
<name>MURG_FLAPJ</name>
<reference key="1">
    <citation type="journal article" date="2007" name="Nat. Biotechnol.">
        <title>Complete genome sequence of the fish pathogen Flavobacterium psychrophilum.</title>
        <authorList>
            <person name="Duchaud E."/>
            <person name="Boussaha M."/>
            <person name="Loux V."/>
            <person name="Bernardet J.-F."/>
            <person name="Michel C."/>
            <person name="Kerouault B."/>
            <person name="Mondot S."/>
            <person name="Nicolas P."/>
            <person name="Bossy R."/>
            <person name="Caron C."/>
            <person name="Bessieres P."/>
            <person name="Gibrat J.-F."/>
            <person name="Claverol S."/>
            <person name="Dumetz F."/>
            <person name="Le Henaff M."/>
            <person name="Benmansour A."/>
        </authorList>
    </citation>
    <scope>NUCLEOTIDE SEQUENCE [LARGE SCALE GENOMIC DNA]</scope>
    <source>
        <strain>ATCC 49511 / DSM 21280 / CIP 103535 / JIP02/86</strain>
    </source>
</reference>
<dbReference type="EC" id="2.4.1.227" evidence="1"/>
<dbReference type="EMBL" id="AM398681">
    <property type="protein sequence ID" value="CAL44119.1"/>
    <property type="molecule type" value="Genomic_DNA"/>
</dbReference>
<dbReference type="RefSeq" id="WP_011964156.1">
    <property type="nucleotide sequence ID" value="NC_009613.3"/>
</dbReference>
<dbReference type="RefSeq" id="YP_001296921.1">
    <property type="nucleotide sequence ID" value="NC_009613.3"/>
</dbReference>
<dbReference type="SMR" id="A6H195"/>
<dbReference type="STRING" id="402612.FP2057"/>
<dbReference type="CAZy" id="GT28">
    <property type="family name" value="Glycosyltransferase Family 28"/>
</dbReference>
<dbReference type="EnsemblBacteria" id="CAL44119">
    <property type="protein sequence ID" value="CAL44119"/>
    <property type="gene ID" value="FP2057"/>
</dbReference>
<dbReference type="GeneID" id="66551759"/>
<dbReference type="KEGG" id="fps:FP2057"/>
<dbReference type="PATRIC" id="fig|402612.5.peg.2084"/>
<dbReference type="eggNOG" id="COG0707">
    <property type="taxonomic scope" value="Bacteria"/>
</dbReference>
<dbReference type="HOGENOM" id="CLU_037404_0_1_10"/>
<dbReference type="OrthoDB" id="9808936at2"/>
<dbReference type="UniPathway" id="UPA00219"/>
<dbReference type="Proteomes" id="UP000006394">
    <property type="component" value="Chromosome"/>
</dbReference>
<dbReference type="GO" id="GO:0005886">
    <property type="term" value="C:plasma membrane"/>
    <property type="evidence" value="ECO:0007669"/>
    <property type="project" value="UniProtKB-SubCell"/>
</dbReference>
<dbReference type="GO" id="GO:0051991">
    <property type="term" value="F:UDP-N-acetyl-D-glucosamine:N-acetylmuramoyl-L-alanyl-D-glutamyl-meso-2,6-diaminopimelyl-D-alanyl-D-alanine-diphosphoundecaprenol 4-beta-N-acetylglucosaminlytransferase activity"/>
    <property type="evidence" value="ECO:0007669"/>
    <property type="project" value="RHEA"/>
</dbReference>
<dbReference type="GO" id="GO:0050511">
    <property type="term" value="F:undecaprenyldiphospho-muramoylpentapeptide beta-N-acetylglucosaminyltransferase activity"/>
    <property type="evidence" value="ECO:0007669"/>
    <property type="project" value="UniProtKB-UniRule"/>
</dbReference>
<dbReference type="GO" id="GO:0005975">
    <property type="term" value="P:carbohydrate metabolic process"/>
    <property type="evidence" value="ECO:0007669"/>
    <property type="project" value="InterPro"/>
</dbReference>
<dbReference type="GO" id="GO:0051301">
    <property type="term" value="P:cell division"/>
    <property type="evidence" value="ECO:0007669"/>
    <property type="project" value="UniProtKB-KW"/>
</dbReference>
<dbReference type="GO" id="GO:0071555">
    <property type="term" value="P:cell wall organization"/>
    <property type="evidence" value="ECO:0007669"/>
    <property type="project" value="UniProtKB-KW"/>
</dbReference>
<dbReference type="GO" id="GO:0030259">
    <property type="term" value="P:lipid glycosylation"/>
    <property type="evidence" value="ECO:0007669"/>
    <property type="project" value="UniProtKB-UniRule"/>
</dbReference>
<dbReference type="GO" id="GO:0009252">
    <property type="term" value="P:peptidoglycan biosynthetic process"/>
    <property type="evidence" value="ECO:0007669"/>
    <property type="project" value="UniProtKB-UniRule"/>
</dbReference>
<dbReference type="GO" id="GO:0008360">
    <property type="term" value="P:regulation of cell shape"/>
    <property type="evidence" value="ECO:0007669"/>
    <property type="project" value="UniProtKB-KW"/>
</dbReference>
<dbReference type="CDD" id="cd03785">
    <property type="entry name" value="GT28_MurG"/>
    <property type="match status" value="1"/>
</dbReference>
<dbReference type="Gene3D" id="3.40.50.2000">
    <property type="entry name" value="Glycogen Phosphorylase B"/>
    <property type="match status" value="2"/>
</dbReference>
<dbReference type="HAMAP" id="MF_00033">
    <property type="entry name" value="MurG"/>
    <property type="match status" value="1"/>
</dbReference>
<dbReference type="InterPro" id="IPR006009">
    <property type="entry name" value="GlcNAc_MurG"/>
</dbReference>
<dbReference type="InterPro" id="IPR007235">
    <property type="entry name" value="Glyco_trans_28_C"/>
</dbReference>
<dbReference type="InterPro" id="IPR004276">
    <property type="entry name" value="GlycoTrans_28_N"/>
</dbReference>
<dbReference type="NCBIfam" id="TIGR01133">
    <property type="entry name" value="murG"/>
    <property type="match status" value="1"/>
</dbReference>
<dbReference type="PANTHER" id="PTHR21015:SF22">
    <property type="entry name" value="GLYCOSYLTRANSFERASE"/>
    <property type="match status" value="1"/>
</dbReference>
<dbReference type="PANTHER" id="PTHR21015">
    <property type="entry name" value="UDP-N-ACETYLGLUCOSAMINE--N-ACETYLMURAMYL-(PENTAPEPTIDE) PYROPHOSPHORYL-UNDECAPRENOL N-ACETYLGLUCOSAMINE TRANSFERASE 1"/>
    <property type="match status" value="1"/>
</dbReference>
<dbReference type="Pfam" id="PF04101">
    <property type="entry name" value="Glyco_tran_28_C"/>
    <property type="match status" value="1"/>
</dbReference>
<dbReference type="Pfam" id="PF03033">
    <property type="entry name" value="Glyco_transf_28"/>
    <property type="match status" value="1"/>
</dbReference>
<dbReference type="SUPFAM" id="SSF53756">
    <property type="entry name" value="UDP-Glycosyltransferase/glycogen phosphorylase"/>
    <property type="match status" value="1"/>
</dbReference>
<sequence length="367" mass="40446">MEQYKFILSGGGTGGHIYPAIAIANELKSRFPNCKILFVGAKDKMEMQKVPQAGYDIKGLSIAGLQRKITLQNAMFPFKLLSSLVKSFGIVQQFKPDVVIGTGGFASGAVLKVASILGIATVIQEQNSYPGITNKLLSKKANKICVAYENLEQFFPKDKMILTGNPVRQDLISVDGKRNEAIDYFKLDANKKTILILGGSLGARRINQLIAKEIDWLLSQNVQIIWQCGKLYFEDYKPFSGKENVQILSFIDRMDLVYAAADIVISRSGASSVSELAIVGKPVIFIPSPNVAEDHQTKNAQAIVNKQGAILLKESQLDSEFKFVFESLLNDKAKQEDLSKNIKQLALPNATKDIVDEIIKLVESQKS</sequence>
<protein>
    <recommendedName>
        <fullName evidence="1">UDP-N-acetylglucosamine--N-acetylmuramyl-(pentapeptide) pyrophosphoryl-undecaprenol N-acetylglucosamine transferase</fullName>
        <ecNumber evidence="1">2.4.1.227</ecNumber>
    </recommendedName>
    <alternativeName>
        <fullName evidence="1">Undecaprenyl-PP-MurNAc-pentapeptide-UDPGlcNAc GlcNAc transferase</fullName>
    </alternativeName>
</protein>
<comment type="function">
    <text evidence="1">Cell wall formation. Catalyzes the transfer of a GlcNAc subunit on undecaprenyl-pyrophosphoryl-MurNAc-pentapeptide (lipid intermediate I) to form undecaprenyl-pyrophosphoryl-MurNAc-(pentapeptide)GlcNAc (lipid intermediate II).</text>
</comment>
<comment type="catalytic activity">
    <reaction evidence="1">
        <text>di-trans,octa-cis-undecaprenyl diphospho-N-acetyl-alpha-D-muramoyl-L-alanyl-D-glutamyl-meso-2,6-diaminopimeloyl-D-alanyl-D-alanine + UDP-N-acetyl-alpha-D-glucosamine = di-trans,octa-cis-undecaprenyl diphospho-[N-acetyl-alpha-D-glucosaminyl-(1-&gt;4)]-N-acetyl-alpha-D-muramoyl-L-alanyl-D-glutamyl-meso-2,6-diaminopimeloyl-D-alanyl-D-alanine + UDP + H(+)</text>
        <dbReference type="Rhea" id="RHEA:31227"/>
        <dbReference type="ChEBI" id="CHEBI:15378"/>
        <dbReference type="ChEBI" id="CHEBI:57705"/>
        <dbReference type="ChEBI" id="CHEBI:58223"/>
        <dbReference type="ChEBI" id="CHEBI:61387"/>
        <dbReference type="ChEBI" id="CHEBI:61388"/>
        <dbReference type="EC" id="2.4.1.227"/>
    </reaction>
</comment>
<comment type="pathway">
    <text evidence="1">Cell wall biogenesis; peptidoglycan biosynthesis.</text>
</comment>
<comment type="subcellular location">
    <subcellularLocation>
        <location evidence="1">Cell inner membrane</location>
        <topology evidence="1">Peripheral membrane protein</topology>
        <orientation evidence="1">Cytoplasmic side</orientation>
    </subcellularLocation>
</comment>
<comment type="similarity">
    <text evidence="1">Belongs to the glycosyltransferase 28 family. MurG subfamily.</text>
</comment>
<gene>
    <name evidence="1" type="primary">murG</name>
    <name type="ordered locus">FP2057</name>
</gene>
<organism>
    <name type="scientific">Flavobacterium psychrophilum (strain ATCC 49511 / DSM 21280 / CIP 103535 / JIP02/86)</name>
    <dbReference type="NCBI Taxonomy" id="402612"/>
    <lineage>
        <taxon>Bacteria</taxon>
        <taxon>Pseudomonadati</taxon>
        <taxon>Bacteroidota</taxon>
        <taxon>Flavobacteriia</taxon>
        <taxon>Flavobacteriales</taxon>
        <taxon>Flavobacteriaceae</taxon>
        <taxon>Flavobacterium</taxon>
    </lineage>
</organism>
<feature type="chain" id="PRO_0000315093" description="UDP-N-acetylglucosamine--N-acetylmuramyl-(pentapeptide) pyrophosphoryl-undecaprenol N-acetylglucosamine transferase">
    <location>
        <begin position="1"/>
        <end position="367"/>
    </location>
</feature>
<feature type="binding site" evidence="1">
    <location>
        <begin position="13"/>
        <end position="15"/>
    </location>
    <ligand>
        <name>UDP-N-acetyl-alpha-D-glucosamine</name>
        <dbReference type="ChEBI" id="CHEBI:57705"/>
    </ligand>
</feature>
<feature type="binding site" evidence="1">
    <location>
        <position position="127"/>
    </location>
    <ligand>
        <name>UDP-N-acetyl-alpha-D-glucosamine</name>
        <dbReference type="ChEBI" id="CHEBI:57705"/>
    </ligand>
</feature>
<feature type="binding site" evidence="1">
    <location>
        <position position="168"/>
    </location>
    <ligand>
        <name>UDP-N-acetyl-alpha-D-glucosamine</name>
        <dbReference type="ChEBI" id="CHEBI:57705"/>
    </ligand>
</feature>
<feature type="binding site" evidence="1">
    <location>
        <position position="200"/>
    </location>
    <ligand>
        <name>UDP-N-acetyl-alpha-D-glucosamine</name>
        <dbReference type="ChEBI" id="CHEBI:57705"/>
    </ligand>
</feature>
<feature type="binding site" evidence="1">
    <location>
        <position position="251"/>
    </location>
    <ligand>
        <name>UDP-N-acetyl-alpha-D-glucosamine</name>
        <dbReference type="ChEBI" id="CHEBI:57705"/>
    </ligand>
</feature>
<feature type="binding site" evidence="1">
    <location>
        <position position="296"/>
    </location>
    <ligand>
        <name>UDP-N-acetyl-alpha-D-glucosamine</name>
        <dbReference type="ChEBI" id="CHEBI:57705"/>
    </ligand>
</feature>
<accession>A6H195</accession>